<dbReference type="EC" id="2.7.10.1"/>
<dbReference type="EMBL" id="M35195">
    <property type="protein sequence ID" value="AAA48664.1"/>
    <property type="molecule type" value="mRNA"/>
</dbReference>
<dbReference type="PIR" id="A35963">
    <property type="entry name" value="A35963"/>
</dbReference>
<dbReference type="RefSeq" id="NP_990840.2">
    <property type="nucleotide sequence ID" value="NM_205509.2"/>
</dbReference>
<dbReference type="SMR" id="P18460"/>
<dbReference type="FunCoup" id="P18460">
    <property type="interactions" value="471"/>
</dbReference>
<dbReference type="STRING" id="9031.ENSGALP00000001710"/>
<dbReference type="GlyCosmos" id="P18460">
    <property type="glycosylation" value="8 sites, No reported glycans"/>
</dbReference>
<dbReference type="GlyGen" id="P18460">
    <property type="glycosylation" value="8 sites"/>
</dbReference>
<dbReference type="PaxDb" id="9031-ENSGALP00000001710"/>
<dbReference type="GeneID" id="396515"/>
<dbReference type="KEGG" id="gga:396515"/>
<dbReference type="CTD" id="2261"/>
<dbReference type="VEuPathDB" id="HostDB:geneid_396515"/>
<dbReference type="eggNOG" id="KOG0200">
    <property type="taxonomic scope" value="Eukaryota"/>
</dbReference>
<dbReference type="InParanoid" id="P18460"/>
<dbReference type="OrthoDB" id="5984265at2759"/>
<dbReference type="PhylomeDB" id="P18460"/>
<dbReference type="BRENDA" id="2.7.10.1">
    <property type="organism ID" value="1306"/>
</dbReference>
<dbReference type="Reactome" id="R-GGA-109704">
    <property type="pathway name" value="PI3K Cascade"/>
</dbReference>
<dbReference type="Reactome" id="R-GGA-1257604">
    <property type="pathway name" value="PIP3 activates AKT signaling"/>
</dbReference>
<dbReference type="Reactome" id="R-GGA-190371">
    <property type="pathway name" value="FGFR3b ligand binding and activation"/>
</dbReference>
<dbReference type="Reactome" id="R-GGA-190372">
    <property type="pathway name" value="FGFR3c ligand binding and activation"/>
</dbReference>
<dbReference type="Reactome" id="R-GGA-5654227">
    <property type="pathway name" value="Phospholipase C-mediated cascade, FGFR3"/>
</dbReference>
<dbReference type="Reactome" id="R-GGA-5654704">
    <property type="pathway name" value="SHC-mediated cascade:FGFR3"/>
</dbReference>
<dbReference type="Reactome" id="R-GGA-5654706">
    <property type="pathway name" value="FRS-mediated FGFR3 signaling"/>
</dbReference>
<dbReference type="Reactome" id="R-GGA-5654710">
    <property type="pathway name" value="PI-3K cascade:FGFR3"/>
</dbReference>
<dbReference type="Reactome" id="R-GGA-5654732">
    <property type="pathway name" value="Negative regulation of FGFR3 signaling"/>
</dbReference>
<dbReference type="Reactome" id="R-GGA-5673001">
    <property type="pathway name" value="RAF/MAP kinase cascade"/>
</dbReference>
<dbReference type="Reactome" id="R-GGA-6811558">
    <property type="pathway name" value="PI5P, PP2A and IER3 Regulate PI3K/AKT Signaling"/>
</dbReference>
<dbReference type="PRO" id="PR:P18460"/>
<dbReference type="Proteomes" id="UP000000539">
    <property type="component" value="Chromosome 4"/>
</dbReference>
<dbReference type="Bgee" id="ENSGALG00000015708">
    <property type="expression patterns" value="Expressed in ovary and 10 other cell types or tissues"/>
</dbReference>
<dbReference type="GO" id="GO:0005886">
    <property type="term" value="C:plasma membrane"/>
    <property type="evidence" value="ECO:0000318"/>
    <property type="project" value="GO_Central"/>
</dbReference>
<dbReference type="GO" id="GO:0043235">
    <property type="term" value="C:receptor complex"/>
    <property type="evidence" value="ECO:0000318"/>
    <property type="project" value="GO_Central"/>
</dbReference>
<dbReference type="GO" id="GO:0005524">
    <property type="term" value="F:ATP binding"/>
    <property type="evidence" value="ECO:0007669"/>
    <property type="project" value="UniProtKB-KW"/>
</dbReference>
<dbReference type="GO" id="GO:0017134">
    <property type="term" value="F:fibroblast growth factor binding"/>
    <property type="evidence" value="ECO:0000318"/>
    <property type="project" value="GO_Central"/>
</dbReference>
<dbReference type="GO" id="GO:0005007">
    <property type="term" value="F:fibroblast growth factor receptor activity"/>
    <property type="evidence" value="ECO:0000318"/>
    <property type="project" value="GO_Central"/>
</dbReference>
<dbReference type="GO" id="GO:0006915">
    <property type="term" value="P:apoptotic process"/>
    <property type="evidence" value="ECO:0007669"/>
    <property type="project" value="UniProtKB-KW"/>
</dbReference>
<dbReference type="GO" id="GO:0030154">
    <property type="term" value="P:cell differentiation"/>
    <property type="evidence" value="ECO:0007669"/>
    <property type="project" value="UniProtKB-ARBA"/>
</dbReference>
<dbReference type="GO" id="GO:0008543">
    <property type="term" value="P:fibroblast growth factor receptor signaling pathway"/>
    <property type="evidence" value="ECO:0000318"/>
    <property type="project" value="GO_Central"/>
</dbReference>
<dbReference type="GO" id="GO:0008284">
    <property type="term" value="P:positive regulation of cell population proliferation"/>
    <property type="evidence" value="ECO:0000318"/>
    <property type="project" value="GO_Central"/>
</dbReference>
<dbReference type="GO" id="GO:0010604">
    <property type="term" value="P:positive regulation of macromolecule metabolic process"/>
    <property type="evidence" value="ECO:0007669"/>
    <property type="project" value="UniProtKB-ARBA"/>
</dbReference>
<dbReference type="GO" id="GO:0043410">
    <property type="term" value="P:positive regulation of MAPK cascade"/>
    <property type="evidence" value="ECO:0000318"/>
    <property type="project" value="GO_Central"/>
</dbReference>
<dbReference type="GO" id="GO:0080090">
    <property type="term" value="P:regulation of primary metabolic process"/>
    <property type="evidence" value="ECO:0007669"/>
    <property type="project" value="UniProtKB-ARBA"/>
</dbReference>
<dbReference type="CDD" id="cd05857">
    <property type="entry name" value="IgI_2_FGFR"/>
    <property type="match status" value="1"/>
</dbReference>
<dbReference type="CDD" id="cd05858">
    <property type="entry name" value="IgI_3_FGFR2"/>
    <property type="match status" value="1"/>
</dbReference>
<dbReference type="CDD" id="cd05100">
    <property type="entry name" value="PTKc_FGFR3"/>
    <property type="match status" value="1"/>
</dbReference>
<dbReference type="FunFam" id="1.10.510.10:FF:000007">
    <property type="entry name" value="Fibroblast growth factor receptor"/>
    <property type="match status" value="1"/>
</dbReference>
<dbReference type="FunFam" id="2.60.40.10:FF:000016">
    <property type="entry name" value="Fibroblast growth factor receptor"/>
    <property type="match status" value="1"/>
</dbReference>
<dbReference type="FunFam" id="2.60.40.10:FF:000020">
    <property type="entry name" value="Fibroblast growth factor receptor"/>
    <property type="match status" value="1"/>
</dbReference>
<dbReference type="FunFam" id="2.60.40.10:FF:000423">
    <property type="entry name" value="Fibroblast growth factor receptor"/>
    <property type="match status" value="1"/>
</dbReference>
<dbReference type="FunFam" id="3.30.200.20:FF:000011">
    <property type="entry name" value="Fibroblast growth factor receptor"/>
    <property type="match status" value="1"/>
</dbReference>
<dbReference type="Gene3D" id="6.10.250.1740">
    <property type="match status" value="1"/>
</dbReference>
<dbReference type="Gene3D" id="2.60.40.10">
    <property type="entry name" value="Immunoglobulins"/>
    <property type="match status" value="3"/>
</dbReference>
<dbReference type="Gene3D" id="3.30.200.20">
    <property type="entry name" value="Phosphorylase Kinase, domain 1"/>
    <property type="match status" value="1"/>
</dbReference>
<dbReference type="Gene3D" id="1.10.510.10">
    <property type="entry name" value="Transferase(Phosphotransferase) domain 1"/>
    <property type="match status" value="1"/>
</dbReference>
<dbReference type="InterPro" id="IPR016248">
    <property type="entry name" value="FGF_rcpt_fam"/>
</dbReference>
<dbReference type="InterPro" id="IPR007110">
    <property type="entry name" value="Ig-like_dom"/>
</dbReference>
<dbReference type="InterPro" id="IPR036179">
    <property type="entry name" value="Ig-like_dom_sf"/>
</dbReference>
<dbReference type="InterPro" id="IPR013783">
    <property type="entry name" value="Ig-like_fold"/>
</dbReference>
<dbReference type="InterPro" id="IPR013098">
    <property type="entry name" value="Ig_I-set"/>
</dbReference>
<dbReference type="InterPro" id="IPR003599">
    <property type="entry name" value="Ig_sub"/>
</dbReference>
<dbReference type="InterPro" id="IPR003598">
    <property type="entry name" value="Ig_sub2"/>
</dbReference>
<dbReference type="InterPro" id="IPR013151">
    <property type="entry name" value="Immunoglobulin_dom"/>
</dbReference>
<dbReference type="InterPro" id="IPR011009">
    <property type="entry name" value="Kinase-like_dom_sf"/>
</dbReference>
<dbReference type="InterPro" id="IPR000719">
    <property type="entry name" value="Prot_kinase_dom"/>
</dbReference>
<dbReference type="InterPro" id="IPR017441">
    <property type="entry name" value="Protein_kinase_ATP_BS"/>
</dbReference>
<dbReference type="InterPro" id="IPR050122">
    <property type="entry name" value="RTK"/>
</dbReference>
<dbReference type="InterPro" id="IPR001245">
    <property type="entry name" value="Ser-Thr/Tyr_kinase_cat_dom"/>
</dbReference>
<dbReference type="InterPro" id="IPR008266">
    <property type="entry name" value="Tyr_kinase_AS"/>
</dbReference>
<dbReference type="InterPro" id="IPR020635">
    <property type="entry name" value="Tyr_kinase_cat_dom"/>
</dbReference>
<dbReference type="PANTHER" id="PTHR24416:SF505">
    <property type="entry name" value="FIBROBLAST GROWTH FACTOR RECEPTOR 3"/>
    <property type="match status" value="1"/>
</dbReference>
<dbReference type="PANTHER" id="PTHR24416">
    <property type="entry name" value="TYROSINE-PROTEIN KINASE RECEPTOR"/>
    <property type="match status" value="1"/>
</dbReference>
<dbReference type="Pfam" id="PF21165">
    <property type="entry name" value="FGFR3_TM"/>
    <property type="match status" value="1"/>
</dbReference>
<dbReference type="Pfam" id="PF07679">
    <property type="entry name" value="I-set"/>
    <property type="match status" value="1"/>
</dbReference>
<dbReference type="Pfam" id="PF00047">
    <property type="entry name" value="ig"/>
    <property type="match status" value="1"/>
</dbReference>
<dbReference type="Pfam" id="PF13927">
    <property type="entry name" value="Ig_3"/>
    <property type="match status" value="1"/>
</dbReference>
<dbReference type="Pfam" id="PF07714">
    <property type="entry name" value="PK_Tyr_Ser-Thr"/>
    <property type="match status" value="1"/>
</dbReference>
<dbReference type="PIRSF" id="PIRSF000628">
    <property type="entry name" value="FGFR"/>
    <property type="match status" value="1"/>
</dbReference>
<dbReference type="PRINTS" id="PR00109">
    <property type="entry name" value="TYRKINASE"/>
</dbReference>
<dbReference type="SMART" id="SM00409">
    <property type="entry name" value="IG"/>
    <property type="match status" value="3"/>
</dbReference>
<dbReference type="SMART" id="SM00408">
    <property type="entry name" value="IGc2"/>
    <property type="match status" value="3"/>
</dbReference>
<dbReference type="SMART" id="SM00219">
    <property type="entry name" value="TyrKc"/>
    <property type="match status" value="1"/>
</dbReference>
<dbReference type="SUPFAM" id="SSF48726">
    <property type="entry name" value="Immunoglobulin"/>
    <property type="match status" value="3"/>
</dbReference>
<dbReference type="SUPFAM" id="SSF56112">
    <property type="entry name" value="Protein kinase-like (PK-like)"/>
    <property type="match status" value="1"/>
</dbReference>
<dbReference type="PROSITE" id="PS50835">
    <property type="entry name" value="IG_LIKE"/>
    <property type="match status" value="3"/>
</dbReference>
<dbReference type="PROSITE" id="PS00107">
    <property type="entry name" value="PROTEIN_KINASE_ATP"/>
    <property type="match status" value="1"/>
</dbReference>
<dbReference type="PROSITE" id="PS50011">
    <property type="entry name" value="PROTEIN_KINASE_DOM"/>
    <property type="match status" value="1"/>
</dbReference>
<dbReference type="PROSITE" id="PS00109">
    <property type="entry name" value="PROTEIN_KINASE_TYR"/>
    <property type="match status" value="1"/>
</dbReference>
<name>FGFR3_CHICK</name>
<reference key="1">
    <citation type="journal article" date="1990" name="Proc. Natl. Acad. Sci. U.S.A.">
        <title>A distinctive family of embryonic protein-tyrosine kinase receptors.</title>
        <authorList>
            <person name="Pasquale E.B."/>
        </authorList>
    </citation>
    <scope>NUCLEOTIDE SEQUENCE [MRNA]</scope>
</reference>
<feature type="signal peptide" evidence="2">
    <location>
        <begin position="1"/>
        <end position="19"/>
    </location>
</feature>
<feature type="chain" id="PRO_0000016790" description="Fibroblast growth factor receptor 3">
    <location>
        <begin position="20"/>
        <end position="806"/>
    </location>
</feature>
<feature type="topological domain" description="Extracellular" evidence="2">
    <location>
        <begin position="20"/>
        <end position="364"/>
    </location>
</feature>
<feature type="transmembrane region" description="Helical" evidence="2">
    <location>
        <begin position="365"/>
        <end position="389"/>
    </location>
</feature>
<feature type="topological domain" description="Cytoplasmic" evidence="2">
    <location>
        <begin position="390"/>
        <end position="806"/>
    </location>
</feature>
<feature type="domain" description="Ig-like C2-type 1">
    <location>
        <begin position="24"/>
        <end position="124"/>
    </location>
</feature>
<feature type="domain" description="Ig-like C2-type 2">
    <location>
        <begin position="150"/>
        <end position="238"/>
    </location>
</feature>
<feature type="domain" description="Ig-like C2-type 3">
    <location>
        <begin position="247"/>
        <end position="349"/>
    </location>
</feature>
<feature type="domain" description="Protein kinase" evidence="4">
    <location>
        <begin position="466"/>
        <end position="755"/>
    </location>
</feature>
<feature type="region of interest" description="Disordered" evidence="6">
    <location>
        <begin position="121"/>
        <end position="146"/>
    </location>
</feature>
<feature type="compositionally biased region" description="Acidic residues" evidence="6">
    <location>
        <begin position="130"/>
        <end position="141"/>
    </location>
</feature>
<feature type="active site" description="Proton acceptor" evidence="4 5">
    <location>
        <position position="611"/>
    </location>
</feature>
<feature type="binding site" evidence="4">
    <location>
        <begin position="472"/>
        <end position="480"/>
    </location>
    <ligand>
        <name>ATP</name>
        <dbReference type="ChEBI" id="CHEBI:30616"/>
    </ligand>
</feature>
<feature type="binding site" evidence="4">
    <location>
        <position position="502"/>
    </location>
    <ligand>
        <name>ATP</name>
        <dbReference type="ChEBI" id="CHEBI:30616"/>
    </ligand>
</feature>
<feature type="modified residue" description="Phosphotyrosine; by autocatalysis" evidence="1">
    <location>
        <position position="641"/>
    </location>
</feature>
<feature type="modified residue" description="Phosphotyrosine; by autocatalysis" evidence="1">
    <location>
        <position position="642"/>
    </location>
</feature>
<feature type="modified residue" description="Phosphotyrosine; by autocatalysis" evidence="1">
    <location>
        <position position="718"/>
    </location>
</feature>
<feature type="modified residue" description="Phosphotyrosine; by autocatalysis" evidence="1">
    <location>
        <position position="754"/>
    </location>
</feature>
<feature type="glycosylation site" description="N-linked (GlcNAc...) asparagine" evidence="2">
    <location>
        <position position="83"/>
    </location>
</feature>
<feature type="glycosylation site" description="N-linked (GlcNAc...) asparagine" evidence="2">
    <location>
        <position position="96"/>
    </location>
</feature>
<feature type="glycosylation site" description="N-linked (GlcNAc...) asparagine" evidence="2">
    <location>
        <position position="118"/>
    </location>
</feature>
<feature type="glycosylation site" description="N-linked (GlcNAc...) asparagine" evidence="2">
    <location>
        <position position="219"/>
    </location>
</feature>
<feature type="glycosylation site" description="N-linked (GlcNAc...) asparagine" evidence="2">
    <location>
        <position position="256"/>
    </location>
</feature>
<feature type="glycosylation site" description="N-linked (GlcNAc...) asparagine" evidence="2">
    <location>
        <position position="288"/>
    </location>
</feature>
<feature type="glycosylation site" description="N-linked (GlcNAc...) asparagine" evidence="2">
    <location>
        <position position="309"/>
    </location>
</feature>
<feature type="glycosylation site" description="N-linked (GlcNAc...) asparagine" evidence="2">
    <location>
        <position position="322"/>
    </location>
</feature>
<feature type="disulfide bond" evidence="3">
    <location>
        <begin position="61"/>
        <end position="107"/>
    </location>
</feature>
<feature type="disulfide bond" evidence="3">
    <location>
        <begin position="170"/>
        <end position="222"/>
    </location>
</feature>
<feature type="disulfide bond" evidence="3">
    <location>
        <begin position="269"/>
        <end position="333"/>
    </location>
</feature>
<keyword id="KW-0053">Apoptosis</keyword>
<keyword id="KW-0067">ATP-binding</keyword>
<keyword id="KW-1003">Cell membrane</keyword>
<keyword id="KW-1015">Disulfide bond</keyword>
<keyword id="KW-0325">Glycoprotein</keyword>
<keyword id="KW-0393">Immunoglobulin domain</keyword>
<keyword id="KW-0418">Kinase</keyword>
<keyword id="KW-0472">Membrane</keyword>
<keyword id="KW-0547">Nucleotide-binding</keyword>
<keyword id="KW-0597">Phosphoprotein</keyword>
<keyword id="KW-0675">Receptor</keyword>
<keyword id="KW-1185">Reference proteome</keyword>
<keyword id="KW-0677">Repeat</keyword>
<keyword id="KW-0732">Signal</keyword>
<keyword id="KW-0808">Transferase</keyword>
<keyword id="KW-0812">Transmembrane</keyword>
<keyword id="KW-1133">Transmembrane helix</keyword>
<keyword id="KW-0829">Tyrosine-protein kinase</keyword>
<accession>P18460</accession>
<gene>
    <name type="primary">FGFR3</name>
    <name type="synonym">CEK2</name>
</gene>
<organism>
    <name type="scientific">Gallus gallus</name>
    <name type="common">Chicken</name>
    <dbReference type="NCBI Taxonomy" id="9031"/>
    <lineage>
        <taxon>Eukaryota</taxon>
        <taxon>Metazoa</taxon>
        <taxon>Chordata</taxon>
        <taxon>Craniata</taxon>
        <taxon>Vertebrata</taxon>
        <taxon>Euteleostomi</taxon>
        <taxon>Archelosauria</taxon>
        <taxon>Archosauria</taxon>
        <taxon>Dinosauria</taxon>
        <taxon>Saurischia</taxon>
        <taxon>Theropoda</taxon>
        <taxon>Coelurosauria</taxon>
        <taxon>Aves</taxon>
        <taxon>Neognathae</taxon>
        <taxon>Galloanserae</taxon>
        <taxon>Galliformes</taxon>
        <taxon>Phasianidae</taxon>
        <taxon>Phasianinae</taxon>
        <taxon>Gallus</taxon>
    </lineage>
</organism>
<comment type="function">
    <text evidence="1">Tyrosine-protein kinase that acts as a cell-surface receptor for fibroblast growth factors and plays an essential role in the regulation of cell proliferation, differentiation and apoptosis. Plays an essential role in the regulation of chondrocyte differentiation, proliferation and apoptosis, and is required for normal skeleton development. Regulates both osteogenesis and postnatal bone mineralization by osteoblasts. Promotes apoptosis in chondrocytes, but can also promote cancer cell proliferation. Phosphorylates PLCG1, CBL and FRS2. Ligand binding leads to the activation of several signaling cascades. Activation of PLCG1 leads to the production of the cellular signaling molecules diacylglycerol and inositol 1,4,5-trisphosphate. Phosphorylation of FRS2 triggers recruitment of GRB2, GAB1, PIK3R1 and SOS1, and mediates activation of RAS, MAPK1/ERK2, MAPK3/ERK1 and the MAP kinase signaling pathway, as well as of the AKT1 signaling pathway (By similarity).</text>
</comment>
<comment type="catalytic activity">
    <reaction evidence="5">
        <text>L-tyrosyl-[protein] + ATP = O-phospho-L-tyrosyl-[protein] + ADP + H(+)</text>
        <dbReference type="Rhea" id="RHEA:10596"/>
        <dbReference type="Rhea" id="RHEA-COMP:10136"/>
        <dbReference type="Rhea" id="RHEA-COMP:20101"/>
        <dbReference type="ChEBI" id="CHEBI:15378"/>
        <dbReference type="ChEBI" id="CHEBI:30616"/>
        <dbReference type="ChEBI" id="CHEBI:46858"/>
        <dbReference type="ChEBI" id="CHEBI:61978"/>
        <dbReference type="ChEBI" id="CHEBI:456216"/>
        <dbReference type="EC" id="2.7.10.1"/>
    </reaction>
</comment>
<comment type="activity regulation">
    <text evidence="1">Present in an inactive conformation in the absence of bound ligand. Ligand binding leads to dimerization and activation by autophosphorylation on tyrosine residues (By similarity).</text>
</comment>
<comment type="subunit">
    <text evidence="1">Monomer. Homodimer after ligand binding (By similarity).</text>
</comment>
<comment type="subcellular location">
    <subcellularLocation>
        <location evidence="1">Cell membrane</location>
        <topology evidence="1">Single-pass type I membrane protein</topology>
    </subcellularLocation>
</comment>
<comment type="domain">
    <text evidence="1">The second and third Ig-like domains directly interact with fibroblast growth factors (FGF) and heparan sulfate proteoglycans.</text>
</comment>
<comment type="PTM">
    <text evidence="1">Autophosphorylated. Binding of FGF family members together with heparan sulfate proteoglycan or heparin promotes receptor dimerization and autophosphorylation on tyrosine residues. Autophosphorylation occurs in trans between the two FGFR molecules present in the dimer (By similarity).</text>
</comment>
<comment type="similarity">
    <text evidence="4">Belongs to the protein kinase superfamily. Tyr protein kinase family. Fibroblast growth factor receptor subfamily.</text>
</comment>
<protein>
    <recommendedName>
        <fullName>Fibroblast growth factor receptor 3</fullName>
        <shortName>FGFR-3</shortName>
        <ecNumber>2.7.10.1</ecNumber>
    </recommendedName>
    <alternativeName>
        <fullName>Tyrosine kinase receptor CEK2</fullName>
    </alternativeName>
</protein>
<sequence>MRAAWGSVWCLCLAAAVGALPAARRRGAERSGGQAAEYLRSETAFLEELVFGSGDTIELSCNTQSSSVSVFWFKDGIGIAPSNRTHIGQKLLKIINVSYDDSGLYSCKPRHSNEVLGNFTVRVTDSPSSGDDEDDDDESEDTGVPFWTRPDKMEKKLLAVPAANTVRFRCPAGGNPTPTIYWLKNGKEFKGEHRIGGIKLRHQQWSLVMESVVPSDRGNYTCVVENKYGNIRHTYQLDVLERSPHRPILQAGLPANQTVVVGSNVEFHCKVYSDAQPHIQWLKHVEVNGSKYGPDGTPYVTVLKTAGVNTTDKELEILYLRNVTFEDAGEYTCLAGNSIGFSHHSAWLTVLPAEELMEMDDSGSVYAGILSYGTGLVLFILVLVIVIICRMKMPNKKAMNTTTVQKVSKFPLKRQQVSLESNSSMNSNTPLVRITRLSSSDGPMLANVSELELPPDPKWELARSRLTLGKPLGEGCFGQVVMAEAIGIDKDKPNKAITVAVKMLKDDATDKDLSDLVSEMEMMKMIGKHKNIINLLGACTQDGPLYVLVEYASKGNLREYLRARRPPGMDYSFDTCKLPEEQLTFKDLVSCAYQVARGMEYLASQKCIHRDLAARNVLVTEDNVMKIADFGLARDVHNIDYYKKTTNGRLPVKWMAPEALFDRVYTHQSDVWSFGVLLWEIFTLGGSPYPGIPVEELFKLLKEGHRMDKPANCTHDLYMIMRECWHAVPSQRPTFKQLVEDLDRVLTMTSTDEYLDLSVPFEQYSPAGQDTHSTCSSGDDSVFAHDLLPDEPCLPKHVPCNGVIRT</sequence>
<evidence type="ECO:0000250" key="1"/>
<evidence type="ECO:0000255" key="2"/>
<evidence type="ECO:0000255" key="3">
    <source>
        <dbReference type="PROSITE-ProRule" id="PRU00114"/>
    </source>
</evidence>
<evidence type="ECO:0000255" key="4">
    <source>
        <dbReference type="PROSITE-ProRule" id="PRU00159"/>
    </source>
</evidence>
<evidence type="ECO:0000255" key="5">
    <source>
        <dbReference type="PROSITE-ProRule" id="PRU10028"/>
    </source>
</evidence>
<evidence type="ECO:0000256" key="6">
    <source>
        <dbReference type="SAM" id="MobiDB-lite"/>
    </source>
</evidence>
<proteinExistence type="evidence at transcript level"/>